<comment type="function">
    <text evidence="1">One of the essential components for the initiation of protein synthesis. Stabilizes the binding of IF-2 and IF-3 on the 30S subunit to which N-formylmethionyl-tRNA(fMet) subsequently binds. Helps modulate mRNA selection, yielding the 30S pre-initiation complex (PIC). Upon addition of the 50S ribosomal subunit IF-1, IF-2 and IF-3 are released leaving the mature 70S translation initiation complex.</text>
</comment>
<comment type="subunit">
    <text evidence="1">Component of the 30S ribosomal translation pre-initiation complex which assembles on the 30S ribosome in the order IF-2 and IF-3, IF-1 and N-formylmethionyl-tRNA(fMet); mRNA recruitment can occur at any time during PIC assembly.</text>
</comment>
<comment type="subcellular location">
    <subcellularLocation>
        <location evidence="1">Cytoplasm</location>
    </subcellularLocation>
</comment>
<comment type="similarity">
    <text evidence="1">Belongs to the IF-1 family.</text>
</comment>
<organism>
    <name type="scientific">Xanthomonas campestris pv. campestris (strain ATCC 33913 / DSM 3586 / NCPPB 528 / LMG 568 / P 25)</name>
    <dbReference type="NCBI Taxonomy" id="190485"/>
    <lineage>
        <taxon>Bacteria</taxon>
        <taxon>Pseudomonadati</taxon>
        <taxon>Pseudomonadota</taxon>
        <taxon>Gammaproteobacteria</taxon>
        <taxon>Lysobacterales</taxon>
        <taxon>Lysobacteraceae</taxon>
        <taxon>Xanthomonas</taxon>
    </lineage>
</organism>
<gene>
    <name evidence="1" type="primary">infA</name>
    <name type="ordered locus">XCC1968</name>
</gene>
<sequence length="72" mass="8402">MSKDDSIEFEGSVSETLPNTTFRVKLENGYEIIAHISGRMRKNYIRILTGDRVKVEMTPYDLTKGRITYRMK</sequence>
<dbReference type="EMBL" id="AE008922">
    <property type="protein sequence ID" value="AAM41257.1"/>
    <property type="molecule type" value="Genomic_DNA"/>
</dbReference>
<dbReference type="RefSeq" id="NP_637333.1">
    <property type="nucleotide sequence ID" value="NC_003902.1"/>
</dbReference>
<dbReference type="RefSeq" id="WP_011037132.1">
    <property type="nucleotide sequence ID" value="NC_003902.1"/>
</dbReference>
<dbReference type="SMR" id="Q8P997"/>
<dbReference type="STRING" id="190485.XCC1968"/>
<dbReference type="EnsemblBacteria" id="AAM41257">
    <property type="protein sequence ID" value="AAM41257"/>
    <property type="gene ID" value="XCC1968"/>
</dbReference>
<dbReference type="KEGG" id="xcc:XCC1968"/>
<dbReference type="PATRIC" id="fig|190485.4.peg.2103"/>
<dbReference type="eggNOG" id="COG0361">
    <property type="taxonomic scope" value="Bacteria"/>
</dbReference>
<dbReference type="HOGENOM" id="CLU_151267_1_0_6"/>
<dbReference type="OrthoDB" id="9803250at2"/>
<dbReference type="Proteomes" id="UP000001010">
    <property type="component" value="Chromosome"/>
</dbReference>
<dbReference type="GO" id="GO:0005829">
    <property type="term" value="C:cytosol"/>
    <property type="evidence" value="ECO:0000318"/>
    <property type="project" value="GO_Central"/>
</dbReference>
<dbReference type="GO" id="GO:0043022">
    <property type="term" value="F:ribosome binding"/>
    <property type="evidence" value="ECO:0000318"/>
    <property type="project" value="GO_Central"/>
</dbReference>
<dbReference type="GO" id="GO:0019843">
    <property type="term" value="F:rRNA binding"/>
    <property type="evidence" value="ECO:0007669"/>
    <property type="project" value="UniProtKB-UniRule"/>
</dbReference>
<dbReference type="GO" id="GO:0003743">
    <property type="term" value="F:translation initiation factor activity"/>
    <property type="evidence" value="ECO:0007669"/>
    <property type="project" value="UniProtKB-UniRule"/>
</dbReference>
<dbReference type="CDD" id="cd04451">
    <property type="entry name" value="S1_IF1"/>
    <property type="match status" value="1"/>
</dbReference>
<dbReference type="FunFam" id="2.40.50.140:FF:000002">
    <property type="entry name" value="Translation initiation factor IF-1"/>
    <property type="match status" value="1"/>
</dbReference>
<dbReference type="Gene3D" id="2.40.50.140">
    <property type="entry name" value="Nucleic acid-binding proteins"/>
    <property type="match status" value="1"/>
</dbReference>
<dbReference type="HAMAP" id="MF_00075">
    <property type="entry name" value="IF_1"/>
    <property type="match status" value="1"/>
</dbReference>
<dbReference type="InterPro" id="IPR012340">
    <property type="entry name" value="NA-bd_OB-fold"/>
</dbReference>
<dbReference type="InterPro" id="IPR006196">
    <property type="entry name" value="RNA-binding_domain_S1_IF1"/>
</dbReference>
<dbReference type="InterPro" id="IPR003029">
    <property type="entry name" value="S1_domain"/>
</dbReference>
<dbReference type="InterPro" id="IPR004368">
    <property type="entry name" value="TIF_IF1"/>
</dbReference>
<dbReference type="NCBIfam" id="TIGR00008">
    <property type="entry name" value="infA"/>
    <property type="match status" value="1"/>
</dbReference>
<dbReference type="PANTHER" id="PTHR33370">
    <property type="entry name" value="TRANSLATION INITIATION FACTOR IF-1, CHLOROPLASTIC"/>
    <property type="match status" value="1"/>
</dbReference>
<dbReference type="PANTHER" id="PTHR33370:SF1">
    <property type="entry name" value="TRANSLATION INITIATION FACTOR IF-1, CHLOROPLASTIC"/>
    <property type="match status" value="1"/>
</dbReference>
<dbReference type="Pfam" id="PF01176">
    <property type="entry name" value="eIF-1a"/>
    <property type="match status" value="1"/>
</dbReference>
<dbReference type="SMART" id="SM00316">
    <property type="entry name" value="S1"/>
    <property type="match status" value="1"/>
</dbReference>
<dbReference type="SUPFAM" id="SSF50249">
    <property type="entry name" value="Nucleic acid-binding proteins"/>
    <property type="match status" value="1"/>
</dbReference>
<dbReference type="PROSITE" id="PS50832">
    <property type="entry name" value="S1_IF1_TYPE"/>
    <property type="match status" value="1"/>
</dbReference>
<keyword id="KW-0963">Cytoplasm</keyword>
<keyword id="KW-0396">Initiation factor</keyword>
<keyword id="KW-0648">Protein biosynthesis</keyword>
<keyword id="KW-1185">Reference proteome</keyword>
<keyword id="KW-0694">RNA-binding</keyword>
<keyword id="KW-0699">rRNA-binding</keyword>
<reference key="1">
    <citation type="journal article" date="2002" name="Nature">
        <title>Comparison of the genomes of two Xanthomonas pathogens with differing host specificities.</title>
        <authorList>
            <person name="da Silva A.C.R."/>
            <person name="Ferro J.A."/>
            <person name="Reinach F.C."/>
            <person name="Farah C.S."/>
            <person name="Furlan L.R."/>
            <person name="Quaggio R.B."/>
            <person name="Monteiro-Vitorello C.B."/>
            <person name="Van Sluys M.A."/>
            <person name="Almeida N.F. Jr."/>
            <person name="Alves L.M.C."/>
            <person name="do Amaral A.M."/>
            <person name="Bertolini M.C."/>
            <person name="Camargo L.E.A."/>
            <person name="Camarotte G."/>
            <person name="Cannavan F."/>
            <person name="Cardozo J."/>
            <person name="Chambergo F."/>
            <person name="Ciapina L.P."/>
            <person name="Cicarelli R.M.B."/>
            <person name="Coutinho L.L."/>
            <person name="Cursino-Santos J.R."/>
            <person name="El-Dorry H."/>
            <person name="Faria J.B."/>
            <person name="Ferreira A.J.S."/>
            <person name="Ferreira R.C.C."/>
            <person name="Ferro M.I.T."/>
            <person name="Formighieri E.F."/>
            <person name="Franco M.C."/>
            <person name="Greggio C.C."/>
            <person name="Gruber A."/>
            <person name="Katsuyama A.M."/>
            <person name="Kishi L.T."/>
            <person name="Leite R.P."/>
            <person name="Lemos E.G.M."/>
            <person name="Lemos M.V.F."/>
            <person name="Locali E.C."/>
            <person name="Machado M.A."/>
            <person name="Madeira A.M.B.N."/>
            <person name="Martinez-Rossi N.M."/>
            <person name="Martins E.C."/>
            <person name="Meidanis J."/>
            <person name="Menck C.F.M."/>
            <person name="Miyaki C.Y."/>
            <person name="Moon D.H."/>
            <person name="Moreira L.M."/>
            <person name="Novo M.T.M."/>
            <person name="Okura V.K."/>
            <person name="Oliveira M.C."/>
            <person name="Oliveira V.R."/>
            <person name="Pereira H.A."/>
            <person name="Rossi A."/>
            <person name="Sena J.A.D."/>
            <person name="Silva C."/>
            <person name="de Souza R.F."/>
            <person name="Spinola L.A.F."/>
            <person name="Takita M.A."/>
            <person name="Tamura R.E."/>
            <person name="Teixeira E.C."/>
            <person name="Tezza R.I.D."/>
            <person name="Trindade dos Santos M."/>
            <person name="Truffi D."/>
            <person name="Tsai S.M."/>
            <person name="White F.F."/>
            <person name="Setubal J.C."/>
            <person name="Kitajima J.P."/>
        </authorList>
    </citation>
    <scope>NUCLEOTIDE SEQUENCE [LARGE SCALE GENOMIC DNA]</scope>
    <source>
        <strain>ATCC 33913 / DSM 3586 / NCPPB 528 / LMG 568 / P 25</strain>
    </source>
</reference>
<protein>
    <recommendedName>
        <fullName evidence="1">Translation initiation factor IF-1</fullName>
    </recommendedName>
</protein>
<accession>Q8P997</accession>
<feature type="chain" id="PRO_0000095909" description="Translation initiation factor IF-1">
    <location>
        <begin position="1"/>
        <end position="72"/>
    </location>
</feature>
<feature type="domain" description="S1-like" evidence="1">
    <location>
        <begin position="1"/>
        <end position="72"/>
    </location>
</feature>
<name>IF1_XANCP</name>
<proteinExistence type="inferred from homology"/>
<evidence type="ECO:0000255" key="1">
    <source>
        <dbReference type="HAMAP-Rule" id="MF_00075"/>
    </source>
</evidence>